<gene>
    <name evidence="1" type="primary">rpsF</name>
    <name type="ordered locus">MHP7448_0296</name>
</gene>
<keyword id="KW-0687">Ribonucleoprotein</keyword>
<keyword id="KW-0689">Ribosomal protein</keyword>
<keyword id="KW-0694">RNA-binding</keyword>
<keyword id="KW-0699">rRNA-binding</keyword>
<proteinExistence type="inferred from homology"/>
<accession>Q4A870</accession>
<reference key="1">
    <citation type="journal article" date="2005" name="J. Bacteriol.">
        <title>Swine and poultry pathogens: the complete genome sequences of two strains of Mycoplasma hyopneumoniae and a strain of Mycoplasma synoviae.</title>
        <authorList>
            <person name="Vasconcelos A.T.R."/>
            <person name="Ferreira H.B."/>
            <person name="Bizarro C.V."/>
            <person name="Bonatto S.L."/>
            <person name="Carvalho M.O."/>
            <person name="Pinto P.M."/>
            <person name="Almeida D.F."/>
            <person name="Almeida L.G.P."/>
            <person name="Almeida R."/>
            <person name="Alves-Junior L."/>
            <person name="Assuncao E.N."/>
            <person name="Azevedo V.A.C."/>
            <person name="Bogo M.R."/>
            <person name="Brigido M.M."/>
            <person name="Brocchi M."/>
            <person name="Burity H.A."/>
            <person name="Camargo A.A."/>
            <person name="Camargo S.S."/>
            <person name="Carepo M.S."/>
            <person name="Carraro D.M."/>
            <person name="de Mattos Cascardo J.C."/>
            <person name="Castro L.A."/>
            <person name="Cavalcanti G."/>
            <person name="Chemale G."/>
            <person name="Collevatti R.G."/>
            <person name="Cunha C.W."/>
            <person name="Dallagiovanna B."/>
            <person name="Dambros B.P."/>
            <person name="Dellagostin O.A."/>
            <person name="Falcao C."/>
            <person name="Fantinatti-Garboggini F."/>
            <person name="Felipe M.S.S."/>
            <person name="Fiorentin L."/>
            <person name="Franco G.R."/>
            <person name="Freitas N.S.A."/>
            <person name="Frias D."/>
            <person name="Grangeiro T.B."/>
            <person name="Grisard E.C."/>
            <person name="Guimaraes C.T."/>
            <person name="Hungria M."/>
            <person name="Jardim S.N."/>
            <person name="Krieger M.A."/>
            <person name="Laurino J.P."/>
            <person name="Lima L.F.A."/>
            <person name="Lopes M.I."/>
            <person name="Loreto E.L.S."/>
            <person name="Madeira H.M.F."/>
            <person name="Manfio G.P."/>
            <person name="Maranhao A.Q."/>
            <person name="Martinkovics C.T."/>
            <person name="Medeiros S.R.B."/>
            <person name="Moreira M.A.M."/>
            <person name="Neiva M."/>
            <person name="Ramalho-Neto C.E."/>
            <person name="Nicolas M.F."/>
            <person name="Oliveira S.C."/>
            <person name="Paixao R.F.C."/>
            <person name="Pedrosa F.O."/>
            <person name="Pena S.D.J."/>
            <person name="Pereira M."/>
            <person name="Pereira-Ferrari L."/>
            <person name="Piffer I."/>
            <person name="Pinto L.S."/>
            <person name="Potrich D.P."/>
            <person name="Salim A.C.M."/>
            <person name="Santos F.R."/>
            <person name="Schmitt R."/>
            <person name="Schneider M.P.C."/>
            <person name="Schrank A."/>
            <person name="Schrank I.S."/>
            <person name="Schuck A.F."/>
            <person name="Seuanez H.N."/>
            <person name="Silva D.W."/>
            <person name="Silva R."/>
            <person name="Silva S.C."/>
            <person name="Soares C.M.A."/>
            <person name="Souza K.R.L."/>
            <person name="Souza R.C."/>
            <person name="Staats C.C."/>
            <person name="Steffens M.B.R."/>
            <person name="Teixeira S.M.R."/>
            <person name="Urmenyi T.P."/>
            <person name="Vainstein M.H."/>
            <person name="Zuccherato L.W."/>
            <person name="Simpson A.J.G."/>
            <person name="Zaha A."/>
        </authorList>
    </citation>
    <scope>NUCLEOTIDE SEQUENCE [LARGE SCALE GENOMIC DNA]</scope>
    <source>
        <strain>7448</strain>
    </source>
</reference>
<protein>
    <recommendedName>
        <fullName evidence="1">Small ribosomal subunit protein bS6</fullName>
    </recommendedName>
    <alternativeName>
        <fullName evidence="3">30S ribosomal protein S6</fullName>
    </alternativeName>
</protein>
<organism>
    <name type="scientific">Mesomycoplasma hyopneumoniae (strain 7448)</name>
    <name type="common">Mycoplasma hyopneumoniae</name>
    <dbReference type="NCBI Taxonomy" id="262722"/>
    <lineage>
        <taxon>Bacteria</taxon>
        <taxon>Bacillati</taxon>
        <taxon>Mycoplasmatota</taxon>
        <taxon>Mycoplasmoidales</taxon>
        <taxon>Metamycoplasmataceae</taxon>
        <taxon>Mesomycoplasma</taxon>
    </lineage>
</organism>
<dbReference type="EMBL" id="AE017244">
    <property type="protein sequence ID" value="AAZ53669.1"/>
    <property type="molecule type" value="Genomic_DNA"/>
</dbReference>
<dbReference type="RefSeq" id="WP_011290138.1">
    <property type="nucleotide sequence ID" value="NC_007332.1"/>
</dbReference>
<dbReference type="SMR" id="Q4A870"/>
<dbReference type="KEGG" id="mhp:MHP7448_0296"/>
<dbReference type="HOGENOM" id="CLU_1150863_0_0_14"/>
<dbReference type="Proteomes" id="UP000000553">
    <property type="component" value="Chromosome"/>
</dbReference>
<dbReference type="GO" id="GO:1990904">
    <property type="term" value="C:ribonucleoprotein complex"/>
    <property type="evidence" value="ECO:0007669"/>
    <property type="project" value="UniProtKB-KW"/>
</dbReference>
<dbReference type="GO" id="GO:0005840">
    <property type="term" value="C:ribosome"/>
    <property type="evidence" value="ECO:0007669"/>
    <property type="project" value="UniProtKB-KW"/>
</dbReference>
<dbReference type="GO" id="GO:0019843">
    <property type="term" value="F:rRNA binding"/>
    <property type="evidence" value="ECO:0007669"/>
    <property type="project" value="UniProtKB-UniRule"/>
</dbReference>
<dbReference type="GO" id="GO:0003735">
    <property type="term" value="F:structural constituent of ribosome"/>
    <property type="evidence" value="ECO:0007669"/>
    <property type="project" value="InterPro"/>
</dbReference>
<dbReference type="GO" id="GO:0006412">
    <property type="term" value="P:translation"/>
    <property type="evidence" value="ECO:0007669"/>
    <property type="project" value="UniProtKB-UniRule"/>
</dbReference>
<dbReference type="CDD" id="cd00473">
    <property type="entry name" value="bS6"/>
    <property type="match status" value="1"/>
</dbReference>
<dbReference type="Gene3D" id="3.30.70.60">
    <property type="match status" value="1"/>
</dbReference>
<dbReference type="HAMAP" id="MF_00360">
    <property type="entry name" value="Ribosomal_bS6"/>
    <property type="match status" value="1"/>
</dbReference>
<dbReference type="InterPro" id="IPR000529">
    <property type="entry name" value="Ribosomal_bS6"/>
</dbReference>
<dbReference type="InterPro" id="IPR035980">
    <property type="entry name" value="Ribosomal_bS6_sf"/>
</dbReference>
<dbReference type="InterPro" id="IPR020814">
    <property type="entry name" value="Ribosomal_S6_plastid/chlpt"/>
</dbReference>
<dbReference type="InterPro" id="IPR014717">
    <property type="entry name" value="Transl_elong_EF1B/ribsomal_bS6"/>
</dbReference>
<dbReference type="NCBIfam" id="TIGR00166">
    <property type="entry name" value="S6"/>
    <property type="match status" value="1"/>
</dbReference>
<dbReference type="Pfam" id="PF01250">
    <property type="entry name" value="Ribosomal_S6"/>
    <property type="match status" value="1"/>
</dbReference>
<dbReference type="SUPFAM" id="SSF54995">
    <property type="entry name" value="Ribosomal protein S6"/>
    <property type="match status" value="1"/>
</dbReference>
<evidence type="ECO:0000255" key="1">
    <source>
        <dbReference type="HAMAP-Rule" id="MF_00360"/>
    </source>
</evidence>
<evidence type="ECO:0000256" key="2">
    <source>
        <dbReference type="SAM" id="MobiDB-lite"/>
    </source>
</evidence>
<evidence type="ECO:0000305" key="3"/>
<feature type="chain" id="PRO_0000229552" description="Small ribosomal subunit protein bS6">
    <location>
        <begin position="1"/>
        <end position="241"/>
    </location>
</feature>
<feature type="region of interest" description="Disordered" evidence="2">
    <location>
        <begin position="97"/>
        <end position="187"/>
    </location>
</feature>
<feature type="region of interest" description="Disordered" evidence="2">
    <location>
        <begin position="199"/>
        <end position="241"/>
    </location>
</feature>
<feature type="compositionally biased region" description="Basic residues" evidence="2">
    <location>
        <begin position="97"/>
        <end position="108"/>
    </location>
</feature>
<feature type="compositionally biased region" description="Basic and acidic residues" evidence="2">
    <location>
        <begin position="109"/>
        <end position="118"/>
    </location>
</feature>
<feature type="compositionally biased region" description="Low complexity" evidence="2">
    <location>
        <begin position="130"/>
        <end position="151"/>
    </location>
</feature>
<feature type="compositionally biased region" description="Low complexity" evidence="2">
    <location>
        <begin position="161"/>
        <end position="180"/>
    </location>
</feature>
<feature type="compositionally biased region" description="Low complexity" evidence="2">
    <location>
        <begin position="199"/>
        <end position="210"/>
    </location>
</feature>
<sequence length="241" mass="29107">MPKYEIMTILDPKAEMAIIDNLLKTVFGDNSTEKLRKLETTNLAYPIRKSKIAQYFLVELNAPTNLIEEFVRRANITREIWRYLIVNLDSEKGLNKKPKIRERNRKYTPRRDRFDKPNFRGNPKSRFDQQDQQATKNQQNFQQNQQNQTSQYRENSRQNQDDFQQVSSNQQNFRQNQQNQSGYHRENNRQNQENIHQNNKNHQNQTSQTQRSRRQYQPIKNPKFNQKEKENYNNKKPQSSN</sequence>
<name>RS6_MESH7</name>
<comment type="function">
    <text evidence="1">Binds together with bS18 to 16S ribosomal RNA.</text>
</comment>
<comment type="similarity">
    <text evidence="1">Belongs to the bacterial ribosomal protein bS6 family.</text>
</comment>